<comment type="function">
    <text evidence="4">Involved in oxidative stress. Transcription factor that acts upon trr1 and ctt1.</text>
</comment>
<comment type="subcellular location">
    <subcellularLocation>
        <location evidence="6">Nucleus</location>
    </subcellularLocation>
</comment>
<comment type="similarity">
    <text evidence="6">In the N-terminal section; belongs to the HSF family.</text>
</comment>
<sequence>MPSSNGSSDFVRKLFNMLEEPEYRHILRWSDSGDSFIVLDTNEFTKTILPRHFKHSNFASFVRQLNKYDFHKVRHEEGAPSIYGEGAWEFRHDDFQLHHKDLLDNIKRKAPSKRNLANENTAPVIENLKQQVDSILDFQKLLDRNLSGLATSYQTILLKMFELKRGIESRDLLMSSIISYLCDLEGSTQRQANPGAMFVPSHPLQELLNAYQALAKGQVATTSPQQIPNQIQQASAATTASSKMTVDTNLGTAQPSLYNTPSSDYELANQEKPADSMASAASLNTPLSSNDHSLNPHAHGSYPMYEKFQPIQHPNPGSFTTHLDSNASMAKSFSQISNDSLAKASSVATSMSQMGAAVPTTGLWKRQPRILLVEDDELSRRMTIKFLTSFDCQVDVAVDGIGAVNKANAGGFDLILMDFILPNLDGLSVTCLIRQYDHNTPILAITSNISMNDAVTYFNHGVTDLLVKPFTKLTLLQLLKKQLLNLLQADNSINMSDVPSTKEAKDDKAPVTFYLENDAPMYPQQMLQDPIQADLQHPH</sequence>
<organism>
    <name type="scientific">Schizosaccharomyces pombe (strain 972 / ATCC 24843)</name>
    <name type="common">Fission yeast</name>
    <dbReference type="NCBI Taxonomy" id="284812"/>
    <lineage>
        <taxon>Eukaryota</taxon>
        <taxon>Fungi</taxon>
        <taxon>Dikarya</taxon>
        <taxon>Ascomycota</taxon>
        <taxon>Taphrinomycotina</taxon>
        <taxon>Schizosaccharomycetes</taxon>
        <taxon>Schizosaccharomycetales</taxon>
        <taxon>Schizosaccharomycetaceae</taxon>
        <taxon>Schizosaccharomyces</taxon>
    </lineage>
</organism>
<feature type="chain" id="PRO_0000124594" description="Transcription factor prr1">
    <location>
        <begin position="1"/>
        <end position="539"/>
    </location>
</feature>
<feature type="domain" description="Response regulatory" evidence="2">
    <location>
        <begin position="369"/>
        <end position="483"/>
    </location>
</feature>
<feature type="DNA-binding region" evidence="1">
    <location>
        <begin position="7"/>
        <end position="111"/>
    </location>
</feature>
<feature type="region of interest" description="Disordered" evidence="3">
    <location>
        <begin position="251"/>
        <end position="281"/>
    </location>
</feature>
<feature type="compositionally biased region" description="Polar residues" evidence="3">
    <location>
        <begin position="251"/>
        <end position="263"/>
    </location>
</feature>
<feature type="modified residue" description="Phosphothreonine" evidence="5">
    <location>
        <position position="221"/>
    </location>
</feature>
<feature type="modified residue" description="Phosphoserine" evidence="5">
    <location>
        <position position="223"/>
    </location>
</feature>
<feature type="modified residue" description="4-aspartylphosphate" evidence="2">
    <location>
        <position position="418"/>
    </location>
</feature>
<evidence type="ECO:0000250" key="1"/>
<evidence type="ECO:0000255" key="2">
    <source>
        <dbReference type="PROSITE-ProRule" id="PRU00169"/>
    </source>
</evidence>
<evidence type="ECO:0000256" key="3">
    <source>
        <dbReference type="SAM" id="MobiDB-lite"/>
    </source>
</evidence>
<evidence type="ECO:0000269" key="4">
    <source>
    </source>
</evidence>
<evidence type="ECO:0000269" key="5">
    <source>
    </source>
</evidence>
<evidence type="ECO:0000305" key="6"/>
<name>PRR1_SCHPO</name>
<protein>
    <recommendedName>
        <fullName>Transcription factor prr1</fullName>
    </recommendedName>
    <alternativeName>
        <fullName>Pombe response regulator 1</fullName>
    </alternativeName>
</protein>
<accession>O14283</accession>
<accession>Q9UTX5</accession>
<keyword id="KW-0238">DNA-binding</keyword>
<keyword id="KW-0539">Nucleus</keyword>
<keyword id="KW-0597">Phosphoprotein</keyword>
<keyword id="KW-1185">Reference proteome</keyword>
<keyword id="KW-0716">Sensory transduction</keyword>
<keyword id="KW-0804">Transcription</keyword>
<keyword id="KW-0805">Transcription regulation</keyword>
<dbReference type="EMBL" id="AB041768">
    <property type="protein sequence ID" value="BAB16722.1"/>
    <property type="molecule type" value="mRNA"/>
</dbReference>
<dbReference type="EMBL" id="CU329670">
    <property type="protein sequence ID" value="CAB16301.1"/>
    <property type="molecule type" value="Genomic_DNA"/>
</dbReference>
<dbReference type="EMBL" id="AB027943">
    <property type="protein sequence ID" value="BAA87247.1"/>
    <property type="molecule type" value="Genomic_DNA"/>
</dbReference>
<dbReference type="PIR" id="T39150">
    <property type="entry name" value="T39150"/>
</dbReference>
<dbReference type="RefSeq" id="NP_594284.1">
    <property type="nucleotide sequence ID" value="NM_001019707.2"/>
</dbReference>
<dbReference type="SMR" id="O14283"/>
<dbReference type="BioGRID" id="278250">
    <property type="interactions" value="13"/>
</dbReference>
<dbReference type="FunCoup" id="O14283">
    <property type="interactions" value="332"/>
</dbReference>
<dbReference type="STRING" id="284812.O14283"/>
<dbReference type="iPTMnet" id="O14283"/>
<dbReference type="PaxDb" id="4896-SPAC8C9.14.1"/>
<dbReference type="EnsemblFungi" id="SPAC8C9.14.1">
    <property type="protein sequence ID" value="SPAC8C9.14.1:pep"/>
    <property type="gene ID" value="SPAC8C9.14"/>
</dbReference>
<dbReference type="GeneID" id="2541756"/>
<dbReference type="KEGG" id="spo:2541756"/>
<dbReference type="PomBase" id="SPAC8C9.14">
    <property type="gene designation" value="prr1"/>
</dbReference>
<dbReference type="VEuPathDB" id="FungiDB:SPAC8C9.14"/>
<dbReference type="eggNOG" id="KOG0519">
    <property type="taxonomic scope" value="Eukaryota"/>
</dbReference>
<dbReference type="eggNOG" id="KOG0627">
    <property type="taxonomic scope" value="Eukaryota"/>
</dbReference>
<dbReference type="HOGENOM" id="CLU_008776_3_1_1"/>
<dbReference type="InParanoid" id="O14283"/>
<dbReference type="OMA" id="TNVDPGW"/>
<dbReference type="PhylomeDB" id="O14283"/>
<dbReference type="PRO" id="PR:O14283"/>
<dbReference type="Proteomes" id="UP000002485">
    <property type="component" value="Chromosome I"/>
</dbReference>
<dbReference type="GO" id="GO:0000785">
    <property type="term" value="C:chromatin"/>
    <property type="evidence" value="ECO:0000314"/>
    <property type="project" value="PomBase"/>
</dbReference>
<dbReference type="GO" id="GO:0005634">
    <property type="term" value="C:nucleus"/>
    <property type="evidence" value="ECO:0000314"/>
    <property type="project" value="PomBase"/>
</dbReference>
<dbReference type="GO" id="GO:0090575">
    <property type="term" value="C:RNA polymerase II transcription regulator complex"/>
    <property type="evidence" value="ECO:0000353"/>
    <property type="project" value="PomBase"/>
</dbReference>
<dbReference type="GO" id="GO:0001228">
    <property type="term" value="F:DNA-binding transcription activator activity, RNA polymerase II-specific"/>
    <property type="evidence" value="ECO:0000314"/>
    <property type="project" value="PomBase"/>
</dbReference>
<dbReference type="GO" id="GO:0000978">
    <property type="term" value="F:RNA polymerase II cis-regulatory region sequence-specific DNA binding"/>
    <property type="evidence" value="ECO:0000314"/>
    <property type="project" value="PomBase"/>
</dbReference>
<dbReference type="GO" id="GO:1900237">
    <property type="term" value="P:positive regulation of induction of conjugation with cellular fusion"/>
    <property type="evidence" value="ECO:0000315"/>
    <property type="project" value="PomBase"/>
</dbReference>
<dbReference type="GO" id="GO:0045944">
    <property type="term" value="P:positive regulation of transcription by RNA polymerase II"/>
    <property type="evidence" value="ECO:0000315"/>
    <property type="project" value="PomBase"/>
</dbReference>
<dbReference type="GO" id="GO:0006357">
    <property type="term" value="P:regulation of transcription by RNA polymerase II"/>
    <property type="evidence" value="ECO:0000315"/>
    <property type="project" value="PomBase"/>
</dbReference>
<dbReference type="CDD" id="cd17546">
    <property type="entry name" value="REC_hyHK_CKI1_RcsC-like"/>
    <property type="match status" value="1"/>
</dbReference>
<dbReference type="FunFam" id="1.10.10.10:FF:000027">
    <property type="entry name" value="Heat shock transcription factor 1"/>
    <property type="match status" value="1"/>
</dbReference>
<dbReference type="Gene3D" id="3.40.50.2300">
    <property type="match status" value="1"/>
</dbReference>
<dbReference type="Gene3D" id="1.10.10.10">
    <property type="entry name" value="Winged helix-like DNA-binding domain superfamily/Winged helix DNA-binding domain"/>
    <property type="match status" value="1"/>
</dbReference>
<dbReference type="InterPro" id="IPR011006">
    <property type="entry name" value="CheY-like_superfamily"/>
</dbReference>
<dbReference type="InterPro" id="IPR000232">
    <property type="entry name" value="HSF_DNA-bd"/>
</dbReference>
<dbReference type="InterPro" id="IPR001789">
    <property type="entry name" value="Sig_transdc_resp-reg_receiver"/>
</dbReference>
<dbReference type="InterPro" id="IPR014402">
    <property type="entry name" value="Sig_transdc_resp-reg_Skn7"/>
</dbReference>
<dbReference type="InterPro" id="IPR036388">
    <property type="entry name" value="WH-like_DNA-bd_sf"/>
</dbReference>
<dbReference type="InterPro" id="IPR036390">
    <property type="entry name" value="WH_DNA-bd_sf"/>
</dbReference>
<dbReference type="PANTHER" id="PTHR10015">
    <property type="entry name" value="HEAT SHOCK TRANSCRIPTION FACTOR"/>
    <property type="match status" value="1"/>
</dbReference>
<dbReference type="PANTHER" id="PTHR10015:SF361">
    <property type="entry name" value="TRANSCRIPTION FACTOR SKN7"/>
    <property type="match status" value="1"/>
</dbReference>
<dbReference type="Pfam" id="PF00447">
    <property type="entry name" value="HSF_DNA-bind"/>
    <property type="match status" value="1"/>
</dbReference>
<dbReference type="Pfam" id="PF00072">
    <property type="entry name" value="Response_reg"/>
    <property type="match status" value="1"/>
</dbReference>
<dbReference type="PIRSF" id="PIRSF002595">
    <property type="entry name" value="RR_SKN7"/>
    <property type="match status" value="1"/>
</dbReference>
<dbReference type="PRINTS" id="PR00056">
    <property type="entry name" value="HSFDOMAIN"/>
</dbReference>
<dbReference type="SMART" id="SM00415">
    <property type="entry name" value="HSF"/>
    <property type="match status" value="1"/>
</dbReference>
<dbReference type="SMART" id="SM00448">
    <property type="entry name" value="REC"/>
    <property type="match status" value="1"/>
</dbReference>
<dbReference type="SUPFAM" id="SSF52172">
    <property type="entry name" value="CheY-like"/>
    <property type="match status" value="1"/>
</dbReference>
<dbReference type="SUPFAM" id="SSF46785">
    <property type="entry name" value="Winged helix' DNA-binding domain"/>
    <property type="match status" value="1"/>
</dbReference>
<dbReference type="PROSITE" id="PS00434">
    <property type="entry name" value="HSF_DOMAIN"/>
    <property type="match status" value="1"/>
</dbReference>
<dbReference type="PROSITE" id="PS50110">
    <property type="entry name" value="RESPONSE_REGULATORY"/>
    <property type="match status" value="1"/>
</dbReference>
<gene>
    <name type="primary">prr1</name>
    <name type="ORF">SPAC8C9.14</name>
</gene>
<reference key="1">
    <citation type="journal article" date="1999" name="J. Biochem.">
        <title>A fission yeast gene (prr1(+)) that encodes a response regulator implicated in oxidative stress response.</title>
        <authorList>
            <person name="Ohmiya R."/>
            <person name="Kato C."/>
            <person name="Yamada H."/>
            <person name="Aiba H."/>
            <person name="Mizuno T."/>
        </authorList>
    </citation>
    <scope>NUCLEOTIDE SEQUENCE [MRNA]</scope>
    <scope>FUNCTION</scope>
</reference>
<reference key="2">
    <citation type="journal article" date="2002" name="Nature">
        <title>The genome sequence of Schizosaccharomyces pombe.</title>
        <authorList>
            <person name="Wood V."/>
            <person name="Gwilliam R."/>
            <person name="Rajandream M.A."/>
            <person name="Lyne M.H."/>
            <person name="Lyne R."/>
            <person name="Stewart A."/>
            <person name="Sgouros J.G."/>
            <person name="Peat N."/>
            <person name="Hayles J."/>
            <person name="Baker S.G."/>
            <person name="Basham D."/>
            <person name="Bowman S."/>
            <person name="Brooks K."/>
            <person name="Brown D."/>
            <person name="Brown S."/>
            <person name="Chillingworth T."/>
            <person name="Churcher C.M."/>
            <person name="Collins M."/>
            <person name="Connor R."/>
            <person name="Cronin A."/>
            <person name="Davis P."/>
            <person name="Feltwell T."/>
            <person name="Fraser A."/>
            <person name="Gentles S."/>
            <person name="Goble A."/>
            <person name="Hamlin N."/>
            <person name="Harris D.E."/>
            <person name="Hidalgo J."/>
            <person name="Hodgson G."/>
            <person name="Holroyd S."/>
            <person name="Hornsby T."/>
            <person name="Howarth S."/>
            <person name="Huckle E.J."/>
            <person name="Hunt S."/>
            <person name="Jagels K."/>
            <person name="James K.D."/>
            <person name="Jones L."/>
            <person name="Jones M."/>
            <person name="Leather S."/>
            <person name="McDonald S."/>
            <person name="McLean J."/>
            <person name="Mooney P."/>
            <person name="Moule S."/>
            <person name="Mungall K.L."/>
            <person name="Murphy L.D."/>
            <person name="Niblett D."/>
            <person name="Odell C."/>
            <person name="Oliver K."/>
            <person name="O'Neil S."/>
            <person name="Pearson D."/>
            <person name="Quail M.A."/>
            <person name="Rabbinowitsch E."/>
            <person name="Rutherford K.M."/>
            <person name="Rutter S."/>
            <person name="Saunders D."/>
            <person name="Seeger K."/>
            <person name="Sharp S."/>
            <person name="Skelton J."/>
            <person name="Simmonds M.N."/>
            <person name="Squares R."/>
            <person name="Squares S."/>
            <person name="Stevens K."/>
            <person name="Taylor K."/>
            <person name="Taylor R.G."/>
            <person name="Tivey A."/>
            <person name="Walsh S.V."/>
            <person name="Warren T."/>
            <person name="Whitehead S."/>
            <person name="Woodward J.R."/>
            <person name="Volckaert G."/>
            <person name="Aert R."/>
            <person name="Robben J."/>
            <person name="Grymonprez B."/>
            <person name="Weltjens I."/>
            <person name="Vanstreels E."/>
            <person name="Rieger M."/>
            <person name="Schaefer M."/>
            <person name="Mueller-Auer S."/>
            <person name="Gabel C."/>
            <person name="Fuchs M."/>
            <person name="Duesterhoeft A."/>
            <person name="Fritzc C."/>
            <person name="Holzer E."/>
            <person name="Moestl D."/>
            <person name="Hilbert H."/>
            <person name="Borzym K."/>
            <person name="Langer I."/>
            <person name="Beck A."/>
            <person name="Lehrach H."/>
            <person name="Reinhardt R."/>
            <person name="Pohl T.M."/>
            <person name="Eger P."/>
            <person name="Zimmermann W."/>
            <person name="Wedler H."/>
            <person name="Wambutt R."/>
            <person name="Purnelle B."/>
            <person name="Goffeau A."/>
            <person name="Cadieu E."/>
            <person name="Dreano S."/>
            <person name="Gloux S."/>
            <person name="Lelaure V."/>
            <person name="Mottier S."/>
            <person name="Galibert F."/>
            <person name="Aves S.J."/>
            <person name="Xiang Z."/>
            <person name="Hunt C."/>
            <person name="Moore K."/>
            <person name="Hurst S.M."/>
            <person name="Lucas M."/>
            <person name="Rochet M."/>
            <person name="Gaillardin C."/>
            <person name="Tallada V.A."/>
            <person name="Garzon A."/>
            <person name="Thode G."/>
            <person name="Daga R.R."/>
            <person name="Cruzado L."/>
            <person name="Jimenez J."/>
            <person name="Sanchez M."/>
            <person name="del Rey F."/>
            <person name="Benito J."/>
            <person name="Dominguez A."/>
            <person name="Revuelta J.L."/>
            <person name="Moreno S."/>
            <person name="Armstrong J."/>
            <person name="Forsburg S.L."/>
            <person name="Cerutti L."/>
            <person name="Lowe T."/>
            <person name="McCombie W.R."/>
            <person name="Paulsen I."/>
            <person name="Potashkin J."/>
            <person name="Shpakovski G.V."/>
            <person name="Ussery D."/>
            <person name="Barrell B.G."/>
            <person name="Nurse P."/>
        </authorList>
    </citation>
    <scope>NUCLEOTIDE SEQUENCE [LARGE SCALE GENOMIC DNA]</scope>
    <source>
        <strain>972 / ATCC 24843</strain>
    </source>
</reference>
<reference key="3">
    <citation type="journal article" date="2000" name="Genes Cells">
        <title>Large-scale screening of intracellular protein localization in living fission yeast cells by the use of a GFP-fusion genomic DNA library.</title>
        <authorList>
            <person name="Ding D.-Q."/>
            <person name="Tomita Y."/>
            <person name="Yamamoto A."/>
            <person name="Chikashige Y."/>
            <person name="Haraguchi T."/>
            <person name="Hiraoka Y."/>
        </authorList>
    </citation>
    <scope>NUCLEOTIDE SEQUENCE [LARGE SCALE GENOMIC DNA] OF 224-413</scope>
    <source>
        <strain>ATCC 38364 / 968</strain>
    </source>
</reference>
<reference key="4">
    <citation type="journal article" date="2008" name="J. Proteome Res.">
        <title>Phosphoproteome analysis of fission yeast.</title>
        <authorList>
            <person name="Wilson-Grady J.T."/>
            <person name="Villen J."/>
            <person name="Gygi S.P."/>
        </authorList>
    </citation>
    <scope>PHOSPHORYLATION [LARGE SCALE ANALYSIS] AT THR-221 AND SER-223</scope>
    <scope>IDENTIFICATION BY MASS SPECTROMETRY</scope>
</reference>
<proteinExistence type="evidence at protein level"/>